<organism>
    <name type="scientific">Oryza sativa subsp. japonica</name>
    <name type="common">Rice</name>
    <dbReference type="NCBI Taxonomy" id="39947"/>
    <lineage>
        <taxon>Eukaryota</taxon>
        <taxon>Viridiplantae</taxon>
        <taxon>Streptophyta</taxon>
        <taxon>Embryophyta</taxon>
        <taxon>Tracheophyta</taxon>
        <taxon>Spermatophyta</taxon>
        <taxon>Magnoliopsida</taxon>
        <taxon>Liliopsida</taxon>
        <taxon>Poales</taxon>
        <taxon>Poaceae</taxon>
        <taxon>BOP clade</taxon>
        <taxon>Oryzoideae</taxon>
        <taxon>Oryzeae</taxon>
        <taxon>Oryzinae</taxon>
        <taxon>Oryza</taxon>
        <taxon>Oryza sativa</taxon>
    </lineage>
</organism>
<keyword id="KW-0341">Growth regulation</keyword>
<keyword id="KW-0349">Heme</keyword>
<keyword id="KW-0408">Iron</keyword>
<keyword id="KW-0472">Membrane</keyword>
<keyword id="KW-0479">Metal-binding</keyword>
<keyword id="KW-0503">Monooxygenase</keyword>
<keyword id="KW-0560">Oxidoreductase</keyword>
<keyword id="KW-1185">Reference proteome</keyword>
<keyword id="KW-0812">Transmembrane</keyword>
<keyword id="KW-1133">Transmembrane helix</keyword>
<reference key="1">
    <citation type="journal article" date="2011" name="Plant J.">
        <title>Rice CYP734As function as multisubstrate and multifunctional enzymes in brassinosteroid catabolism.</title>
        <authorList>
            <person name="Sakamoto T."/>
            <person name="Kawabe A."/>
            <person name="Tokida-Segawa A."/>
            <person name="Shimizu B.I."/>
            <person name="Takatsuto S."/>
            <person name="Shimada Y."/>
            <person name="Fujioka S."/>
            <person name="Mizutani M."/>
        </authorList>
    </citation>
    <scope>NUCLEOTIDE SEQUENCE [MRNA]</scope>
    <scope>FUNCTION</scope>
    <scope>TISSUE SPECIFICITY</scope>
    <scope>INDUCTION</scope>
    <source>
        <strain>cv. Nipponbare</strain>
    </source>
</reference>
<reference key="2">
    <citation type="journal article" date="2002" name="Nature">
        <title>The genome sequence and structure of rice chromosome 1.</title>
        <authorList>
            <person name="Sasaki T."/>
            <person name="Matsumoto T."/>
            <person name="Yamamoto K."/>
            <person name="Sakata K."/>
            <person name="Baba T."/>
            <person name="Katayose Y."/>
            <person name="Wu J."/>
            <person name="Niimura Y."/>
            <person name="Cheng Z."/>
            <person name="Nagamura Y."/>
            <person name="Antonio B.A."/>
            <person name="Kanamori H."/>
            <person name="Hosokawa S."/>
            <person name="Masukawa M."/>
            <person name="Arikawa K."/>
            <person name="Chiden Y."/>
            <person name="Hayashi M."/>
            <person name="Okamoto M."/>
            <person name="Ando T."/>
            <person name="Aoki H."/>
            <person name="Arita K."/>
            <person name="Hamada M."/>
            <person name="Harada C."/>
            <person name="Hijishita S."/>
            <person name="Honda M."/>
            <person name="Ichikawa Y."/>
            <person name="Idonuma A."/>
            <person name="Iijima M."/>
            <person name="Ikeda M."/>
            <person name="Ikeno M."/>
            <person name="Ito S."/>
            <person name="Ito T."/>
            <person name="Ito Y."/>
            <person name="Ito Y."/>
            <person name="Iwabuchi A."/>
            <person name="Kamiya K."/>
            <person name="Karasawa W."/>
            <person name="Katagiri S."/>
            <person name="Kikuta A."/>
            <person name="Kobayashi N."/>
            <person name="Kono I."/>
            <person name="Machita K."/>
            <person name="Maehara T."/>
            <person name="Mizuno H."/>
            <person name="Mizubayashi T."/>
            <person name="Mukai Y."/>
            <person name="Nagasaki H."/>
            <person name="Nakashima M."/>
            <person name="Nakama Y."/>
            <person name="Nakamichi Y."/>
            <person name="Nakamura M."/>
            <person name="Namiki N."/>
            <person name="Negishi M."/>
            <person name="Ohta I."/>
            <person name="Ono N."/>
            <person name="Saji S."/>
            <person name="Sakai K."/>
            <person name="Shibata M."/>
            <person name="Shimokawa T."/>
            <person name="Shomura A."/>
            <person name="Song J."/>
            <person name="Takazaki Y."/>
            <person name="Terasawa K."/>
            <person name="Tsuji K."/>
            <person name="Waki K."/>
            <person name="Yamagata H."/>
            <person name="Yamane H."/>
            <person name="Yoshiki S."/>
            <person name="Yoshihara R."/>
            <person name="Yukawa K."/>
            <person name="Zhong H."/>
            <person name="Iwama H."/>
            <person name="Endo T."/>
            <person name="Ito H."/>
            <person name="Hahn J.H."/>
            <person name="Kim H.-I."/>
            <person name="Eun M.-Y."/>
            <person name="Yano M."/>
            <person name="Jiang J."/>
            <person name="Gojobori T."/>
        </authorList>
    </citation>
    <scope>NUCLEOTIDE SEQUENCE [LARGE SCALE GENOMIC DNA]</scope>
    <source>
        <strain>cv. Nipponbare</strain>
    </source>
</reference>
<reference key="3">
    <citation type="journal article" date="2005" name="Nature">
        <title>The map-based sequence of the rice genome.</title>
        <authorList>
            <consortium name="International rice genome sequencing project (IRGSP)"/>
        </authorList>
    </citation>
    <scope>NUCLEOTIDE SEQUENCE [LARGE SCALE GENOMIC DNA]</scope>
    <source>
        <strain>cv. Nipponbare</strain>
    </source>
</reference>
<reference key="4">
    <citation type="journal article" date="2008" name="Nucleic Acids Res.">
        <title>The rice annotation project database (RAP-DB): 2008 update.</title>
        <authorList>
            <consortium name="The rice annotation project (RAP)"/>
        </authorList>
    </citation>
    <scope>GENOME REANNOTATION</scope>
    <source>
        <strain>cv. Nipponbare</strain>
    </source>
</reference>
<reference key="5">
    <citation type="journal article" date="2013" name="Rice">
        <title>Improvement of the Oryza sativa Nipponbare reference genome using next generation sequence and optical map data.</title>
        <authorList>
            <person name="Kawahara Y."/>
            <person name="de la Bastide M."/>
            <person name="Hamilton J.P."/>
            <person name="Kanamori H."/>
            <person name="McCombie W.R."/>
            <person name="Ouyang S."/>
            <person name="Schwartz D.C."/>
            <person name="Tanaka T."/>
            <person name="Wu J."/>
            <person name="Zhou S."/>
            <person name="Childs K.L."/>
            <person name="Davidson R.M."/>
            <person name="Lin H."/>
            <person name="Quesada-Ocampo L."/>
            <person name="Vaillancourt B."/>
            <person name="Sakai H."/>
            <person name="Lee S.S."/>
            <person name="Kim J."/>
            <person name="Numa H."/>
            <person name="Itoh T."/>
            <person name="Buell C.R."/>
            <person name="Matsumoto T."/>
        </authorList>
    </citation>
    <scope>GENOME REANNOTATION</scope>
    <source>
        <strain>cv. Nipponbare</strain>
    </source>
</reference>
<feature type="chain" id="PRO_0000411204" description="Cytochrome P450 734A6">
    <location>
        <begin position="1"/>
        <end position="542"/>
    </location>
</feature>
<feature type="transmembrane region" description="Helical" evidence="2">
    <location>
        <begin position="2"/>
        <end position="22"/>
    </location>
</feature>
<feature type="binding site" description="axial binding residue" evidence="1">
    <location>
        <position position="474"/>
    </location>
    <ligand>
        <name>heme</name>
        <dbReference type="ChEBI" id="CHEBI:30413"/>
    </ligand>
    <ligandPart>
        <name>Fe</name>
        <dbReference type="ChEBI" id="CHEBI:18248"/>
    </ligandPart>
</feature>
<protein>
    <recommendedName>
        <fullName>Cytochrome P450 734A6</fullName>
        <ecNumber>1.14.-.-</ecNumber>
    </recommendedName>
</protein>
<proteinExistence type="evidence at transcript level"/>
<dbReference type="EC" id="1.14.-.-"/>
<dbReference type="EMBL" id="AB488669">
    <property type="protein sequence ID" value="BAH23802.1"/>
    <property type="molecule type" value="mRNA"/>
</dbReference>
<dbReference type="EMBL" id="AP006237">
    <property type="protein sequence ID" value="BAD69277.1"/>
    <property type="status" value="ALT_SEQ"/>
    <property type="molecule type" value="Genomic_DNA"/>
</dbReference>
<dbReference type="EMBL" id="AP008207">
    <property type="protein sequence ID" value="BAF05017.1"/>
    <property type="status" value="ALT_SEQ"/>
    <property type="molecule type" value="Genomic_DNA"/>
</dbReference>
<dbReference type="EMBL" id="AP014957">
    <property type="status" value="NOT_ANNOTATED_CDS"/>
    <property type="molecule type" value="Genomic_DNA"/>
</dbReference>
<dbReference type="RefSeq" id="XP_015631278.1">
    <property type="nucleotide sequence ID" value="XM_015775792.1"/>
</dbReference>
<dbReference type="SMR" id="B9X287"/>
<dbReference type="FunCoup" id="B9X287">
    <property type="interactions" value="872"/>
</dbReference>
<dbReference type="STRING" id="39947.B9X287"/>
<dbReference type="PaxDb" id="39947-B9X287"/>
<dbReference type="KEGG" id="dosa:Os01g0388000"/>
<dbReference type="InParanoid" id="B9X287"/>
<dbReference type="OrthoDB" id="1470350at2759"/>
<dbReference type="Proteomes" id="UP000000763">
    <property type="component" value="Chromosome 1"/>
</dbReference>
<dbReference type="Proteomes" id="UP000059680">
    <property type="component" value="Chromosome 1"/>
</dbReference>
<dbReference type="GO" id="GO:0016020">
    <property type="term" value="C:membrane"/>
    <property type="evidence" value="ECO:0007669"/>
    <property type="project" value="UniProtKB-SubCell"/>
</dbReference>
<dbReference type="GO" id="GO:0020037">
    <property type="term" value="F:heme binding"/>
    <property type="evidence" value="ECO:0007669"/>
    <property type="project" value="InterPro"/>
</dbReference>
<dbReference type="GO" id="GO:0005506">
    <property type="term" value="F:iron ion binding"/>
    <property type="evidence" value="ECO:0007669"/>
    <property type="project" value="InterPro"/>
</dbReference>
<dbReference type="GO" id="GO:0004497">
    <property type="term" value="F:monooxygenase activity"/>
    <property type="evidence" value="ECO:0000314"/>
    <property type="project" value="UniProtKB"/>
</dbReference>
<dbReference type="GO" id="GO:0016705">
    <property type="term" value="F:oxidoreductase activity, acting on paired donors, with incorporation or reduction of molecular oxygen"/>
    <property type="evidence" value="ECO:0007669"/>
    <property type="project" value="InterPro"/>
</dbReference>
<dbReference type="GO" id="GO:0010268">
    <property type="term" value="P:brassinosteroid homeostasis"/>
    <property type="evidence" value="ECO:0000314"/>
    <property type="project" value="UniProtKB"/>
</dbReference>
<dbReference type="GO" id="GO:0016131">
    <property type="term" value="P:brassinosteroid metabolic process"/>
    <property type="evidence" value="ECO:0000314"/>
    <property type="project" value="UniProtKB"/>
</dbReference>
<dbReference type="CDD" id="cd20639">
    <property type="entry name" value="CYP734"/>
    <property type="match status" value="1"/>
</dbReference>
<dbReference type="FunFam" id="1.10.630.10:FF:000029">
    <property type="entry name" value="Cytochrome P450 734A1"/>
    <property type="match status" value="1"/>
</dbReference>
<dbReference type="Gene3D" id="1.10.630.10">
    <property type="entry name" value="Cytochrome P450"/>
    <property type="match status" value="1"/>
</dbReference>
<dbReference type="InterPro" id="IPR001128">
    <property type="entry name" value="Cyt_P450"/>
</dbReference>
<dbReference type="InterPro" id="IPR017972">
    <property type="entry name" value="Cyt_P450_CS"/>
</dbReference>
<dbReference type="InterPro" id="IPR002401">
    <property type="entry name" value="Cyt_P450_E_grp-I"/>
</dbReference>
<dbReference type="InterPro" id="IPR036396">
    <property type="entry name" value="Cyt_P450_sf"/>
</dbReference>
<dbReference type="InterPro" id="IPR050665">
    <property type="entry name" value="Cytochrome_P450_Monooxygen"/>
</dbReference>
<dbReference type="PANTHER" id="PTHR24282:SF224">
    <property type="entry name" value="CYTOCHROME P450 734A1"/>
    <property type="match status" value="1"/>
</dbReference>
<dbReference type="PANTHER" id="PTHR24282">
    <property type="entry name" value="CYTOCHROME P450 FAMILY MEMBER"/>
    <property type="match status" value="1"/>
</dbReference>
<dbReference type="Pfam" id="PF00067">
    <property type="entry name" value="p450"/>
    <property type="match status" value="1"/>
</dbReference>
<dbReference type="PRINTS" id="PR00463">
    <property type="entry name" value="EP450I"/>
</dbReference>
<dbReference type="PRINTS" id="PR00385">
    <property type="entry name" value="P450"/>
</dbReference>
<dbReference type="SUPFAM" id="SSF48264">
    <property type="entry name" value="Cytochrome P450"/>
    <property type="match status" value="1"/>
</dbReference>
<dbReference type="PROSITE" id="PS00086">
    <property type="entry name" value="CYTOCHROME_P450"/>
    <property type="match status" value="1"/>
</dbReference>
<comment type="function">
    <text evidence="3">Cytochrome P450 involved in brassinosteroids (BRs) inactivation and regulation of BRs homeostasis. Is a multifunctional and multisubstrate enzyme that controls the endogenous bioactive BR content both by direct inactivation of castasterone (CS) and by decreasing the levels of BR precursors. Catalyzes the oxidation of carbon 22 hydroxylated BR intermediates to produce C26 oxidized metabolites.</text>
</comment>
<comment type="cofactor">
    <cofactor evidence="1">
        <name>heme</name>
        <dbReference type="ChEBI" id="CHEBI:30413"/>
    </cofactor>
</comment>
<comment type="subcellular location">
    <subcellularLocation>
        <location evidence="2">Membrane</location>
        <topology evidence="2">Single-pass membrane protein</topology>
    </subcellularLocation>
</comment>
<comment type="tissue specificity">
    <text evidence="3">Highly expressed in leaf sheaths. Expressed in roots, shoot apex, leaf blades, internodes and panicles.</text>
</comment>
<comment type="induction">
    <text evidence="3">By brassinolide (BL).</text>
</comment>
<comment type="miscellaneous">
    <text>Plants overexpressing CYP734A6 show a dwarf phenotype, characterized by abnormal leaves with stiff, tortuous blades, undeveloped leaf sheaths, no flowering and bear seeds. Over-expression of CYP734A6 causes an important reduction of the levels of the BRs castasterone (CS), 6-deoxocastasterone (6-deoxoCS) and 6-deoxotyphasterol (6-deoxoTY).</text>
</comment>
<comment type="similarity">
    <text evidence="4">Belongs to the cytochrome P450 family.</text>
</comment>
<comment type="sequence caution" evidence="4">
    <conflict type="erroneous gene model prediction">
        <sequence resource="EMBL-CDS" id="BAD69277"/>
    </conflict>
</comment>
<comment type="sequence caution" evidence="4">
    <conflict type="erroneous gene model prediction">
        <sequence resource="EMBL-CDS" id="BAF05017"/>
    </conflict>
</comment>
<name>C7346_ORYSJ</name>
<accession>B9X287</accession>
<accession>Q0JML1</accession>
<accession>Q5VMP8</accession>
<gene>
    <name type="primary">CYP734A6</name>
    <name type="ordered locus">Os01g0388000</name>
    <name type="ordered locus">LOC_Os01g29150</name>
    <name type="ORF">OSJNBb0008D07.26</name>
</gene>
<evidence type="ECO:0000250" key="1"/>
<evidence type="ECO:0000255" key="2"/>
<evidence type="ECO:0000269" key="3">
    <source>
    </source>
</evidence>
<evidence type="ECO:0000305" key="4"/>
<sequence length="542" mass="60803">MGWWGWAAAAAAAAAWVAVKVLEVLWWRPRRVEEHFARQGITGPRYRFLVGCVREMVALMVAASAKPMPPPYRSHNVLPRVLAFYHHWKKIYGSTFLIWFGPTPRLAIADPELIREVLLARADRFDRYESHPMVRQLEGEGLVSLRGDKWAHHRRVLTPAFHMDNLRLLLPCVGMTVLDMADKWRAMAEADKSGEVEIDVSDWFQVVTEDAITRTAFGRSYEDGKVVFKLQAQLMAFASEAFRKVFIPGYRFLPTKKNTSSWKLDKEIRKNLVTLIGRRQEAGDDEKLDGCAKDLLGLMINAAASSNGGKRSALPVSPITVNDIVEECKTFFFAGKQTTSNLLTWAIVVLAMHPEWQERARQEVLDVCGADGVPSREQLAKLKTLGMILNETLRLYPPAVATVRRAKADVELGGYLRIPRDTELLIPIMAVHHDARLWGPDAAQFNPARFAGGVARAARHPAAFIPFGLGARMCIGQNLAILEAKLTVAVILHRFEFRLSARYVHAPTVLMLLHPQYGAPIVFRPRSSSQPTCEKMNPLTSS</sequence>